<name>YGC4_YEAST</name>
<proteinExistence type="uncertain"/>
<protein>
    <recommendedName>
        <fullName>Putative uncharacterized protein YGL024W</fullName>
    </recommendedName>
</protein>
<comment type="subcellular location">
    <subcellularLocation>
        <location evidence="2">Membrane</location>
        <topology evidence="2">Multi-pass membrane protein</topology>
    </subcellularLocation>
</comment>
<comment type="miscellaneous">
    <text evidence="2">Partially overlaps PGD1.</text>
</comment>
<comment type="caution">
    <text evidence="3">Product of a dubious gene prediction unlikely to encode a functional protein. Because of that it is not part of the S.cerevisiae S288c complete/reference proteome set.</text>
</comment>
<accession>P53190</accession>
<sequence length="111" mass="12210">MFAIICMNSLNCNRNGRISSRASLICLHTLSLVSFSFLANITCKSSSLTPAGIIESIPVVFTAVVSVLRCLIEEVLVTVSVVLFKISLGAIPKILRKVLVLYIILYYIILY</sequence>
<evidence type="ECO:0000255" key="1"/>
<evidence type="ECO:0000305" key="2"/>
<evidence type="ECO:0000305" key="3">
    <source>
    </source>
</evidence>
<reference key="1">
    <citation type="journal article" date="1997" name="Nature">
        <title>The nucleotide sequence of Saccharomyces cerevisiae chromosome VII.</title>
        <authorList>
            <person name="Tettelin H."/>
            <person name="Agostoni-Carbone M.L."/>
            <person name="Albermann K."/>
            <person name="Albers M."/>
            <person name="Arroyo J."/>
            <person name="Backes U."/>
            <person name="Barreiros T."/>
            <person name="Bertani I."/>
            <person name="Bjourson A.J."/>
            <person name="Brueckner M."/>
            <person name="Bruschi C.V."/>
            <person name="Carignani G."/>
            <person name="Castagnoli L."/>
            <person name="Cerdan E."/>
            <person name="Clemente M.L."/>
            <person name="Coblenz A."/>
            <person name="Coglievina M."/>
            <person name="Coissac E."/>
            <person name="Defoor E."/>
            <person name="Del Bino S."/>
            <person name="Delius H."/>
            <person name="Delneri D."/>
            <person name="de Wergifosse P."/>
            <person name="Dujon B."/>
            <person name="Durand P."/>
            <person name="Entian K.-D."/>
            <person name="Eraso P."/>
            <person name="Escribano V."/>
            <person name="Fabiani L."/>
            <person name="Fartmann B."/>
            <person name="Feroli F."/>
            <person name="Feuermann M."/>
            <person name="Frontali L."/>
            <person name="Garcia-Gonzalez M."/>
            <person name="Garcia-Saez M.I."/>
            <person name="Goffeau A."/>
            <person name="Guerreiro P."/>
            <person name="Hani J."/>
            <person name="Hansen M."/>
            <person name="Hebling U."/>
            <person name="Hernandez K."/>
            <person name="Heumann K."/>
            <person name="Hilger F."/>
            <person name="Hofmann B."/>
            <person name="Indge K.J."/>
            <person name="James C.M."/>
            <person name="Klima R."/>
            <person name="Koetter P."/>
            <person name="Kramer B."/>
            <person name="Kramer W."/>
            <person name="Lauquin G."/>
            <person name="Leuther H."/>
            <person name="Louis E.J."/>
            <person name="Maillier E."/>
            <person name="Marconi A."/>
            <person name="Martegani E."/>
            <person name="Mazon M.J."/>
            <person name="Mazzoni C."/>
            <person name="McReynolds A.D.K."/>
            <person name="Melchioretto P."/>
            <person name="Mewes H.-W."/>
            <person name="Minenkova O."/>
            <person name="Mueller-Auer S."/>
            <person name="Nawrocki A."/>
            <person name="Netter P."/>
            <person name="Neu R."/>
            <person name="Nombela C."/>
            <person name="Oliver S.G."/>
            <person name="Panzeri L."/>
            <person name="Paoluzi S."/>
            <person name="Plevani P."/>
            <person name="Portetelle D."/>
            <person name="Portillo F."/>
            <person name="Potier S."/>
            <person name="Purnelle B."/>
            <person name="Rieger M."/>
            <person name="Riles L."/>
            <person name="Rinaldi T."/>
            <person name="Robben J."/>
            <person name="Rodrigues-Pousada C."/>
            <person name="Rodriguez-Belmonte E."/>
            <person name="Rodriguez-Torres A.M."/>
            <person name="Rose M."/>
            <person name="Ruzzi M."/>
            <person name="Saliola M."/>
            <person name="Sanchez-Perez M."/>
            <person name="Schaefer B."/>
            <person name="Schaefer M."/>
            <person name="Scharfe M."/>
            <person name="Schmidheini T."/>
            <person name="Schreer A."/>
            <person name="Skala J."/>
            <person name="Souciet J.-L."/>
            <person name="Steensma H.Y."/>
            <person name="Talla E."/>
            <person name="Thierry A."/>
            <person name="Vandenbol M."/>
            <person name="van der Aart Q.J.M."/>
            <person name="Van Dyck L."/>
            <person name="Vanoni M."/>
            <person name="Verhasselt P."/>
            <person name="Voet M."/>
            <person name="Volckaert G."/>
            <person name="Wambutt R."/>
            <person name="Watson M.D."/>
            <person name="Weber N."/>
            <person name="Wedler E."/>
            <person name="Wedler H."/>
            <person name="Wipfli P."/>
            <person name="Wolf K."/>
            <person name="Wright L.F."/>
            <person name="Zaccaria P."/>
            <person name="Zimmermann M."/>
            <person name="Zollner A."/>
            <person name="Kleine K."/>
        </authorList>
    </citation>
    <scope>NUCLEOTIDE SEQUENCE [LARGE SCALE GENOMIC DNA]</scope>
    <source>
        <strain>ATCC 204508 / S288c</strain>
    </source>
</reference>
<reference key="2">
    <citation type="journal article" date="2014" name="G3 (Bethesda)">
        <title>The reference genome sequence of Saccharomyces cerevisiae: Then and now.</title>
        <authorList>
            <person name="Engel S.R."/>
            <person name="Dietrich F.S."/>
            <person name="Fisk D.G."/>
            <person name="Binkley G."/>
            <person name="Balakrishnan R."/>
            <person name="Costanzo M.C."/>
            <person name="Dwight S.S."/>
            <person name="Hitz B.C."/>
            <person name="Karra K."/>
            <person name="Nash R.S."/>
            <person name="Weng S."/>
            <person name="Wong E.D."/>
            <person name="Lloyd P."/>
            <person name="Skrzypek M.S."/>
            <person name="Miyasato S.R."/>
            <person name="Simison M."/>
            <person name="Cherry J.M."/>
        </authorList>
    </citation>
    <scope>GENOME REANNOTATION</scope>
    <source>
        <strain>ATCC 204508 / S288c</strain>
    </source>
</reference>
<organism>
    <name type="scientific">Saccharomyces cerevisiae (strain ATCC 204508 / S288c)</name>
    <name type="common">Baker's yeast</name>
    <dbReference type="NCBI Taxonomy" id="559292"/>
    <lineage>
        <taxon>Eukaryota</taxon>
        <taxon>Fungi</taxon>
        <taxon>Dikarya</taxon>
        <taxon>Ascomycota</taxon>
        <taxon>Saccharomycotina</taxon>
        <taxon>Saccharomycetes</taxon>
        <taxon>Saccharomycetales</taxon>
        <taxon>Saccharomycetaceae</taxon>
        <taxon>Saccharomyces</taxon>
    </lineage>
</organism>
<gene>
    <name type="ordered locus">YGL024W</name>
</gene>
<dbReference type="EMBL" id="Z72547">
    <property type="protein sequence ID" value="CAA96726.1"/>
    <property type="molecule type" value="Genomic_DNA"/>
</dbReference>
<dbReference type="PIR" id="S64026">
    <property type="entry name" value="S64026"/>
</dbReference>
<dbReference type="DIP" id="DIP-1187N"/>
<dbReference type="IntAct" id="P53190">
    <property type="interactions" value="2"/>
</dbReference>
<dbReference type="MINT" id="P53190"/>
<dbReference type="STRING" id="4932.YGL024W"/>
<dbReference type="PaxDb" id="4932-YGL024W"/>
<dbReference type="EnsemblFungi" id="YGL024W_mRNA">
    <property type="protein sequence ID" value="YGL024W"/>
    <property type="gene ID" value="YGL024W"/>
</dbReference>
<dbReference type="AGR" id="SGD:S000002992"/>
<dbReference type="SGD" id="S000002992">
    <property type="gene designation" value="YGL024W"/>
</dbReference>
<dbReference type="HOGENOM" id="CLU_2160374_0_0_1"/>
<dbReference type="GO" id="GO:0016020">
    <property type="term" value="C:membrane"/>
    <property type="evidence" value="ECO:0007669"/>
    <property type="project" value="UniProtKB-SubCell"/>
</dbReference>
<feature type="chain" id="PRO_0000202774" description="Putative uncharacterized protein YGL024W">
    <location>
        <begin position="1"/>
        <end position="111"/>
    </location>
</feature>
<feature type="transmembrane region" description="Helical" evidence="1">
    <location>
        <begin position="22"/>
        <end position="42"/>
    </location>
</feature>
<feature type="transmembrane region" description="Helical" evidence="1">
    <location>
        <begin position="48"/>
        <end position="68"/>
    </location>
</feature>
<feature type="transmembrane region" description="Helical" evidence="1">
    <location>
        <begin position="75"/>
        <end position="95"/>
    </location>
</feature>
<keyword id="KW-0472">Membrane</keyword>
<keyword id="KW-0812">Transmembrane</keyword>
<keyword id="KW-1133">Transmembrane helix</keyword>